<dbReference type="EC" id="3.1.26.11"/>
<dbReference type="EMBL" id="AE000516">
    <property type="protein sequence ID" value="AAK46775.1"/>
    <property type="status" value="ALT_SEQ"/>
    <property type="molecule type" value="Genomic_DNA"/>
</dbReference>
<dbReference type="PIR" id="B70684">
    <property type="entry name" value="B70684"/>
</dbReference>
<dbReference type="SMR" id="P9WGZ4"/>
<dbReference type="KEGG" id="mtc:MT2479"/>
<dbReference type="PATRIC" id="fig|83331.31.peg.2670"/>
<dbReference type="HOGENOM" id="CLU_031317_0_0_11"/>
<dbReference type="Proteomes" id="UP000001020">
    <property type="component" value="Chromosome"/>
</dbReference>
<dbReference type="GO" id="GO:0042781">
    <property type="term" value="F:3'-tRNA processing endoribonuclease activity"/>
    <property type="evidence" value="ECO:0007669"/>
    <property type="project" value="UniProtKB-EC"/>
</dbReference>
<dbReference type="GO" id="GO:0046872">
    <property type="term" value="F:metal ion binding"/>
    <property type="evidence" value="ECO:0007669"/>
    <property type="project" value="UniProtKB-KW"/>
</dbReference>
<dbReference type="CDD" id="cd07719">
    <property type="entry name" value="arylsulfatase_AtsA-like_MBL-fold"/>
    <property type="match status" value="1"/>
</dbReference>
<dbReference type="Gene3D" id="3.60.15.10">
    <property type="entry name" value="Ribonuclease Z/Hydroxyacylglutathione hydrolase-like"/>
    <property type="match status" value="1"/>
</dbReference>
<dbReference type="InterPro" id="IPR044094">
    <property type="entry name" value="AtsA-like_MBL-fold"/>
</dbReference>
<dbReference type="InterPro" id="IPR001279">
    <property type="entry name" value="Metallo-B-lactamas"/>
</dbReference>
<dbReference type="InterPro" id="IPR036866">
    <property type="entry name" value="RibonucZ/Hydroxyglut_hydro"/>
</dbReference>
<dbReference type="NCBIfam" id="NF000806">
    <property type="entry name" value="PRK00055.2-4"/>
    <property type="match status" value="1"/>
</dbReference>
<dbReference type="PANTHER" id="PTHR46018">
    <property type="entry name" value="ZINC PHOSPHODIESTERASE ELAC PROTEIN 1"/>
    <property type="match status" value="1"/>
</dbReference>
<dbReference type="PANTHER" id="PTHR46018:SF2">
    <property type="entry name" value="ZINC PHOSPHODIESTERASE ELAC PROTEIN 1"/>
    <property type="match status" value="1"/>
</dbReference>
<dbReference type="Pfam" id="PF12706">
    <property type="entry name" value="Lactamase_B_2"/>
    <property type="match status" value="1"/>
</dbReference>
<dbReference type="SUPFAM" id="SSF56281">
    <property type="entry name" value="Metallo-hydrolase/oxidoreductase"/>
    <property type="match status" value="1"/>
</dbReference>
<sequence length="224" mass="24076">MLLTHLHSDHIAELGDVLITSWVTNFAADPAPLPIIGPPGTAEVVEATLKAFGHDIGYRIAHHADLTTPPPIEVHEYTAGPAWDRDGVTIRVAPTDHRPVTPTIGFRIESDGASVVLAGDTVPCDSLDQLAAGADALVHTVIRKDIVTQIPQQRVKDICDYHSSVQEAAATANRAGVGTLVMTHYVPAIGPGQEEQWRALAATEFSGRIEVGNDLHRVEVHPRR</sequence>
<protein>
    <recommendedName>
        <fullName>Putative ribonuclease Z</fullName>
        <shortName>RNase Z</shortName>
        <ecNumber>3.1.26.11</ecNumber>
    </recommendedName>
    <alternativeName>
        <fullName>tRNA 3 endonuclease</fullName>
    </alternativeName>
    <alternativeName>
        <fullName>tRNase Z</fullName>
    </alternativeName>
</protein>
<gene>
    <name type="primary">rnz</name>
    <name type="ordered locus">MT2479</name>
</gene>
<evidence type="ECO:0000250" key="1"/>
<evidence type="ECO:0000305" key="2"/>
<comment type="function">
    <text evidence="1">Zinc phosphodiesterase, which displays some tRNA 3'-processing endonuclease activity. Probably involved in tRNA maturation, by removing a 3'-trailer from precursor tRNA (By similarity).</text>
</comment>
<comment type="catalytic activity">
    <reaction>
        <text>Endonucleolytic cleavage of RNA, removing extra 3' nucleotides from tRNA precursor, generating 3' termini of tRNAs. A 3'-hydroxy group is left at the tRNA terminus and a 5'-phosphoryl group is left at the trailer molecule.</text>
        <dbReference type="EC" id="3.1.26.11"/>
    </reaction>
</comment>
<comment type="cofactor">
    <cofactor evidence="1">
        <name>Zn(2+)</name>
        <dbReference type="ChEBI" id="CHEBI:29105"/>
    </cofactor>
    <text evidence="1">Binds 1 zinc ion.</text>
</comment>
<comment type="subunit">
    <text evidence="1">Homodimer.</text>
</comment>
<comment type="similarity">
    <text evidence="2">Belongs to the RNase Z family.</text>
</comment>
<comment type="caution">
    <text evidence="2">The N-terminus is shorter than in related proteins.</text>
</comment>
<comment type="sequence caution" evidence="2">
    <conflict type="miscellaneous discrepancy">
        <sequence resource="EMBL-CDS" id="AAK46775"/>
    </conflict>
    <text>Sequence is shorter in its N-terminus and cannot be extended.</text>
</comment>
<keyword id="KW-0255">Endonuclease</keyword>
<keyword id="KW-0378">Hydrolase</keyword>
<keyword id="KW-0479">Metal-binding</keyword>
<keyword id="KW-0540">Nuclease</keyword>
<keyword id="KW-1185">Reference proteome</keyword>
<keyword id="KW-0819">tRNA processing</keyword>
<keyword id="KW-0862">Zinc</keyword>
<accession>P9WGZ4</accession>
<accession>L0TB48</accession>
<accession>P71736</accession>
<accession>Q8VJJ4</accession>
<proteinExistence type="inferred from homology"/>
<feature type="chain" id="PRO_0000428276" description="Putative ribonuclease Z">
    <location>
        <begin position="1"/>
        <end position="224"/>
    </location>
</feature>
<feature type="binding site" evidence="1">
    <location>
        <position position="120"/>
    </location>
    <ligand>
        <name>Zn(2+)</name>
        <dbReference type="ChEBI" id="CHEBI:29105"/>
        <note>catalytic</note>
    </ligand>
</feature>
<feature type="binding site" evidence="1">
    <location>
        <position position="184"/>
    </location>
    <ligand>
        <name>Zn(2+)</name>
        <dbReference type="ChEBI" id="CHEBI:29105"/>
        <note>catalytic</note>
    </ligand>
</feature>
<reference key="1">
    <citation type="journal article" date="2002" name="J. Bacteriol.">
        <title>Whole-genome comparison of Mycobacterium tuberculosis clinical and laboratory strains.</title>
        <authorList>
            <person name="Fleischmann R.D."/>
            <person name="Alland D."/>
            <person name="Eisen J.A."/>
            <person name="Carpenter L."/>
            <person name="White O."/>
            <person name="Peterson J.D."/>
            <person name="DeBoy R.T."/>
            <person name="Dodson R.J."/>
            <person name="Gwinn M.L."/>
            <person name="Haft D.H."/>
            <person name="Hickey E.K."/>
            <person name="Kolonay J.F."/>
            <person name="Nelson W.C."/>
            <person name="Umayam L.A."/>
            <person name="Ermolaeva M.D."/>
            <person name="Salzberg S.L."/>
            <person name="Delcher A."/>
            <person name="Utterback T.R."/>
            <person name="Weidman J.F."/>
            <person name="Khouri H.M."/>
            <person name="Gill J."/>
            <person name="Mikula A."/>
            <person name="Bishai W."/>
            <person name="Jacobs W.R. Jr."/>
            <person name="Venter J.C."/>
            <person name="Fraser C.M."/>
        </authorList>
    </citation>
    <scope>NUCLEOTIDE SEQUENCE [LARGE SCALE GENOMIC DNA]</scope>
    <source>
        <strain>CDC 1551 / Oshkosh</strain>
    </source>
</reference>
<organism>
    <name type="scientific">Mycobacterium tuberculosis (strain CDC 1551 / Oshkosh)</name>
    <dbReference type="NCBI Taxonomy" id="83331"/>
    <lineage>
        <taxon>Bacteria</taxon>
        <taxon>Bacillati</taxon>
        <taxon>Actinomycetota</taxon>
        <taxon>Actinomycetes</taxon>
        <taxon>Mycobacteriales</taxon>
        <taxon>Mycobacteriaceae</taxon>
        <taxon>Mycobacterium</taxon>
        <taxon>Mycobacterium tuberculosis complex</taxon>
    </lineage>
</organism>
<name>RNZ_MYCTO</name>